<evidence type="ECO:0000255" key="1">
    <source>
        <dbReference type="HAMAP-Rule" id="MF_00098"/>
    </source>
</evidence>
<name>SYM_THEAC</name>
<comment type="function">
    <text evidence="1">Is required not only for elongation of protein synthesis but also for the initiation of all mRNA translation through initiator tRNA(fMet) aminoacylation.</text>
</comment>
<comment type="catalytic activity">
    <reaction evidence="1">
        <text>tRNA(Met) + L-methionine + ATP = L-methionyl-tRNA(Met) + AMP + diphosphate</text>
        <dbReference type="Rhea" id="RHEA:13481"/>
        <dbReference type="Rhea" id="RHEA-COMP:9667"/>
        <dbReference type="Rhea" id="RHEA-COMP:9698"/>
        <dbReference type="ChEBI" id="CHEBI:30616"/>
        <dbReference type="ChEBI" id="CHEBI:33019"/>
        <dbReference type="ChEBI" id="CHEBI:57844"/>
        <dbReference type="ChEBI" id="CHEBI:78442"/>
        <dbReference type="ChEBI" id="CHEBI:78530"/>
        <dbReference type="ChEBI" id="CHEBI:456215"/>
        <dbReference type="EC" id="6.1.1.10"/>
    </reaction>
</comment>
<comment type="cofactor">
    <cofactor evidence="1">
        <name>Zn(2+)</name>
        <dbReference type="ChEBI" id="CHEBI:29105"/>
    </cofactor>
    <text evidence="1">Binds 1 zinc ion per subunit.</text>
</comment>
<comment type="subcellular location">
    <subcellularLocation>
        <location evidence="1">Cytoplasm</location>
    </subcellularLocation>
</comment>
<comment type="similarity">
    <text evidence="1">Belongs to the class-I aminoacyl-tRNA synthetase family. MetG type 1 subfamily.</text>
</comment>
<keyword id="KW-0030">Aminoacyl-tRNA synthetase</keyword>
<keyword id="KW-0067">ATP-binding</keyword>
<keyword id="KW-0963">Cytoplasm</keyword>
<keyword id="KW-0436">Ligase</keyword>
<keyword id="KW-0479">Metal-binding</keyword>
<keyword id="KW-0547">Nucleotide-binding</keyword>
<keyword id="KW-0648">Protein biosynthesis</keyword>
<keyword id="KW-1185">Reference proteome</keyword>
<keyword id="KW-0862">Zinc</keyword>
<dbReference type="EC" id="6.1.1.10" evidence="1"/>
<dbReference type="EMBL" id="AL445066">
    <property type="protein sequence ID" value="CAC12287.1"/>
    <property type="molecule type" value="Genomic_DNA"/>
</dbReference>
<dbReference type="RefSeq" id="WP_010901569.1">
    <property type="nucleotide sequence ID" value="NC_002578.1"/>
</dbReference>
<dbReference type="SMR" id="Q9HJ12"/>
<dbReference type="FunCoup" id="Q9HJ12">
    <property type="interactions" value="255"/>
</dbReference>
<dbReference type="STRING" id="273075.gene:9572383"/>
<dbReference type="PaxDb" id="273075-Ta1162"/>
<dbReference type="EnsemblBacteria" id="CAC12287">
    <property type="protein sequence ID" value="CAC12287"/>
    <property type="gene ID" value="CAC12287"/>
</dbReference>
<dbReference type="KEGG" id="tac:Ta1162"/>
<dbReference type="eggNOG" id="arCOG00810">
    <property type="taxonomic scope" value="Archaea"/>
</dbReference>
<dbReference type="HOGENOM" id="CLU_009710_1_2_2"/>
<dbReference type="InParanoid" id="Q9HJ12"/>
<dbReference type="OrthoDB" id="371856at2157"/>
<dbReference type="Proteomes" id="UP000001024">
    <property type="component" value="Chromosome"/>
</dbReference>
<dbReference type="GO" id="GO:0005829">
    <property type="term" value="C:cytosol"/>
    <property type="evidence" value="ECO:0007669"/>
    <property type="project" value="TreeGrafter"/>
</dbReference>
<dbReference type="GO" id="GO:0005524">
    <property type="term" value="F:ATP binding"/>
    <property type="evidence" value="ECO:0007669"/>
    <property type="project" value="UniProtKB-UniRule"/>
</dbReference>
<dbReference type="GO" id="GO:0046872">
    <property type="term" value="F:metal ion binding"/>
    <property type="evidence" value="ECO:0007669"/>
    <property type="project" value="UniProtKB-KW"/>
</dbReference>
<dbReference type="GO" id="GO:0004825">
    <property type="term" value="F:methionine-tRNA ligase activity"/>
    <property type="evidence" value="ECO:0007669"/>
    <property type="project" value="UniProtKB-UniRule"/>
</dbReference>
<dbReference type="GO" id="GO:0006431">
    <property type="term" value="P:methionyl-tRNA aminoacylation"/>
    <property type="evidence" value="ECO:0007669"/>
    <property type="project" value="UniProtKB-UniRule"/>
</dbReference>
<dbReference type="CDD" id="cd07957">
    <property type="entry name" value="Anticodon_Ia_Met"/>
    <property type="match status" value="1"/>
</dbReference>
<dbReference type="CDD" id="cd00814">
    <property type="entry name" value="MetRS_core"/>
    <property type="match status" value="1"/>
</dbReference>
<dbReference type="FunFam" id="2.20.28.20:FF:000001">
    <property type="entry name" value="Methionine--tRNA ligase"/>
    <property type="match status" value="1"/>
</dbReference>
<dbReference type="Gene3D" id="3.40.50.620">
    <property type="entry name" value="HUPs"/>
    <property type="match status" value="1"/>
</dbReference>
<dbReference type="Gene3D" id="1.10.730.10">
    <property type="entry name" value="Isoleucyl-tRNA Synthetase, Domain 1"/>
    <property type="match status" value="1"/>
</dbReference>
<dbReference type="Gene3D" id="2.20.28.20">
    <property type="entry name" value="Methionyl-tRNA synthetase, Zn-domain"/>
    <property type="match status" value="1"/>
</dbReference>
<dbReference type="HAMAP" id="MF_00098">
    <property type="entry name" value="Met_tRNA_synth_type1"/>
    <property type="match status" value="1"/>
</dbReference>
<dbReference type="InterPro" id="IPR001412">
    <property type="entry name" value="aa-tRNA-synth_I_CS"/>
</dbReference>
<dbReference type="InterPro" id="IPR041872">
    <property type="entry name" value="Anticodon_Met"/>
</dbReference>
<dbReference type="InterPro" id="IPR023458">
    <property type="entry name" value="Met-tRNA_ligase_1"/>
</dbReference>
<dbReference type="InterPro" id="IPR014758">
    <property type="entry name" value="Met-tRNA_synth"/>
</dbReference>
<dbReference type="InterPro" id="IPR015413">
    <property type="entry name" value="Methionyl/Leucyl_tRNA_Synth"/>
</dbReference>
<dbReference type="InterPro" id="IPR033911">
    <property type="entry name" value="MetRS_core"/>
</dbReference>
<dbReference type="InterPro" id="IPR029038">
    <property type="entry name" value="MetRS_Zn"/>
</dbReference>
<dbReference type="InterPro" id="IPR014729">
    <property type="entry name" value="Rossmann-like_a/b/a_fold"/>
</dbReference>
<dbReference type="InterPro" id="IPR009080">
    <property type="entry name" value="tRNAsynth_Ia_anticodon-bd"/>
</dbReference>
<dbReference type="NCBIfam" id="TIGR00398">
    <property type="entry name" value="metG"/>
    <property type="match status" value="1"/>
</dbReference>
<dbReference type="PANTHER" id="PTHR45765">
    <property type="entry name" value="METHIONINE--TRNA LIGASE"/>
    <property type="match status" value="1"/>
</dbReference>
<dbReference type="PANTHER" id="PTHR45765:SF1">
    <property type="entry name" value="METHIONINE--TRNA LIGASE, CYTOPLASMIC"/>
    <property type="match status" value="1"/>
</dbReference>
<dbReference type="Pfam" id="PF19303">
    <property type="entry name" value="Anticodon_3"/>
    <property type="match status" value="1"/>
</dbReference>
<dbReference type="Pfam" id="PF09334">
    <property type="entry name" value="tRNA-synt_1g"/>
    <property type="match status" value="1"/>
</dbReference>
<dbReference type="PRINTS" id="PR01041">
    <property type="entry name" value="TRNASYNTHMET"/>
</dbReference>
<dbReference type="SUPFAM" id="SSF47323">
    <property type="entry name" value="Anticodon-binding domain of a subclass of class I aminoacyl-tRNA synthetases"/>
    <property type="match status" value="1"/>
</dbReference>
<dbReference type="SUPFAM" id="SSF57770">
    <property type="entry name" value="Methionyl-tRNA synthetase (MetRS), Zn-domain"/>
    <property type="match status" value="1"/>
</dbReference>
<dbReference type="SUPFAM" id="SSF52374">
    <property type="entry name" value="Nucleotidylyl transferase"/>
    <property type="match status" value="1"/>
</dbReference>
<dbReference type="PROSITE" id="PS00178">
    <property type="entry name" value="AA_TRNA_LIGASE_I"/>
    <property type="match status" value="1"/>
</dbReference>
<organism>
    <name type="scientific">Thermoplasma acidophilum (strain ATCC 25905 / DSM 1728 / JCM 9062 / NBRC 15155 / AMRC-C165)</name>
    <dbReference type="NCBI Taxonomy" id="273075"/>
    <lineage>
        <taxon>Archaea</taxon>
        <taxon>Methanobacteriati</taxon>
        <taxon>Thermoplasmatota</taxon>
        <taxon>Thermoplasmata</taxon>
        <taxon>Thermoplasmatales</taxon>
        <taxon>Thermoplasmataceae</taxon>
        <taxon>Thermoplasma</taxon>
    </lineage>
</organism>
<proteinExistence type="inferred from homology"/>
<reference key="1">
    <citation type="journal article" date="2000" name="Nature">
        <title>The genome sequence of the thermoacidophilic scavenger Thermoplasma acidophilum.</title>
        <authorList>
            <person name="Ruepp A."/>
            <person name="Graml W."/>
            <person name="Santos-Martinez M.-L."/>
            <person name="Koretke K.K."/>
            <person name="Volker C."/>
            <person name="Mewes H.-W."/>
            <person name="Frishman D."/>
            <person name="Stocker S."/>
            <person name="Lupas A.N."/>
            <person name="Baumeister W."/>
        </authorList>
    </citation>
    <scope>NUCLEOTIDE SEQUENCE [LARGE SCALE GENOMIC DNA]</scope>
    <source>
        <strain>ATCC 25905 / DSM 1728 / JCM 9062 / NBRC 15155 / AMRC-C165</strain>
    </source>
</reference>
<gene>
    <name evidence="1" type="primary">metG</name>
    <name type="ordered locus">Ta1162</name>
</gene>
<sequence>MVQIKILVNCALPYANGPLHIGHIAGAYLGADVFVRYNRLMGNQVLYVSGSDEYGTPITVRAEKEGRSPKEIADIYYEEHLRTFENLGISFDIFMRTTWPEHSENAQDFFIKLLNEGYIEKGTMIAPFCRKIGRFMPDRYIEGTCPYCHYPKARGDQCDNCGRTLDPQDLIDPKCILSGETPEFRETEHFFLRLDLLEDRLKSWISSKNFWKPNVLAYTQNFISGGLKKRPITRDIDWGVKIPLDGYDSKRIYVWFEALIGYITGAKEYSKRTGNPDLWKEYYMDPEVRNYYFIGKDNIPFHAIIWPAMLMGYGGFNLPYDIPANEYLTFKGQQFSKSRGIGYSVDDLLKAVPADYLRYYVASILPETGDSDFSLEELVNTVNSDLIDKYGNLVYRILSFMDRYSINPDPVDVSGDEEFKYAQRSFELWSEDLSGVHVKRGLLRWLDLAIYANGFFNRSEPWKTIKNDRQKLNHDLYLSLKITEVLTVMVYPYIPSSAEKIWNMLGIPFAIGQSYRHLYEMHAFSVHRGAIPFEKIDLESLVSKLNN</sequence>
<feature type="chain" id="PRO_0000139202" description="Methionine--tRNA ligase">
    <location>
        <begin position="1"/>
        <end position="547"/>
    </location>
</feature>
<feature type="short sequence motif" description="'HIGH' region">
    <location>
        <begin position="13"/>
        <end position="23"/>
    </location>
</feature>
<feature type="short sequence motif" description="'KMSKS' region">
    <location>
        <begin position="334"/>
        <end position="338"/>
    </location>
</feature>
<feature type="binding site" evidence="1">
    <location>
        <position position="145"/>
    </location>
    <ligand>
        <name>Zn(2+)</name>
        <dbReference type="ChEBI" id="CHEBI:29105"/>
    </ligand>
</feature>
<feature type="binding site" evidence="1">
    <location>
        <position position="148"/>
    </location>
    <ligand>
        <name>Zn(2+)</name>
        <dbReference type="ChEBI" id="CHEBI:29105"/>
    </ligand>
</feature>
<feature type="binding site" evidence="1">
    <location>
        <position position="158"/>
    </location>
    <ligand>
        <name>Zn(2+)</name>
        <dbReference type="ChEBI" id="CHEBI:29105"/>
    </ligand>
</feature>
<feature type="binding site" evidence="1">
    <location>
        <position position="161"/>
    </location>
    <ligand>
        <name>Zn(2+)</name>
        <dbReference type="ChEBI" id="CHEBI:29105"/>
    </ligand>
</feature>
<feature type="binding site" evidence="1">
    <location>
        <position position="337"/>
    </location>
    <ligand>
        <name>ATP</name>
        <dbReference type="ChEBI" id="CHEBI:30616"/>
    </ligand>
</feature>
<protein>
    <recommendedName>
        <fullName evidence="1">Methionine--tRNA ligase</fullName>
        <ecNumber evidence="1">6.1.1.10</ecNumber>
    </recommendedName>
    <alternativeName>
        <fullName evidence="1">Methionyl-tRNA synthetase</fullName>
        <shortName evidence="1">MetRS</shortName>
    </alternativeName>
</protein>
<accession>Q9HJ12</accession>